<keyword id="KW-0414">Isoprene biosynthesis</keyword>
<keyword id="KW-0548">Nucleotidyltransferase</keyword>
<keyword id="KW-1185">Reference proteome</keyword>
<keyword id="KW-0808">Transferase</keyword>
<gene>
    <name evidence="1" type="primary">ispD</name>
    <name type="ordered locus">cce_0963</name>
</gene>
<reference key="1">
    <citation type="journal article" date="2008" name="Proc. Natl. Acad. Sci. U.S.A.">
        <title>The genome of Cyanothece 51142, a unicellular diazotrophic cyanobacterium important in the marine nitrogen cycle.</title>
        <authorList>
            <person name="Welsh E.A."/>
            <person name="Liberton M."/>
            <person name="Stoeckel J."/>
            <person name="Loh T."/>
            <person name="Elvitigala T."/>
            <person name="Wang C."/>
            <person name="Wollam A."/>
            <person name="Fulton R.S."/>
            <person name="Clifton S.W."/>
            <person name="Jacobs J.M."/>
            <person name="Aurora R."/>
            <person name="Ghosh B.K."/>
            <person name="Sherman L.A."/>
            <person name="Smith R.D."/>
            <person name="Wilson R.K."/>
            <person name="Pakrasi H.B."/>
        </authorList>
    </citation>
    <scope>NUCLEOTIDE SEQUENCE [LARGE SCALE GENOMIC DNA]</scope>
    <source>
        <strain>ATCC 51142 / BH68</strain>
    </source>
</reference>
<name>ISPD_CROS5</name>
<accession>B1WSY4</accession>
<protein>
    <recommendedName>
        <fullName evidence="1">2-C-methyl-D-erythritol 4-phosphate cytidylyltransferase</fullName>
        <ecNumber evidence="1">2.7.7.60</ecNumber>
    </recommendedName>
    <alternativeName>
        <fullName evidence="1">4-diphosphocytidyl-2C-methyl-D-erythritol synthase</fullName>
    </alternativeName>
    <alternativeName>
        <fullName evidence="1">MEP cytidylyltransferase</fullName>
        <shortName evidence="1">MCT</shortName>
    </alternativeName>
</protein>
<dbReference type="EC" id="2.7.7.60" evidence="1"/>
<dbReference type="EMBL" id="CP000806">
    <property type="protein sequence ID" value="ACB50314.1"/>
    <property type="molecule type" value="Genomic_DNA"/>
</dbReference>
<dbReference type="RefSeq" id="WP_009547138.1">
    <property type="nucleotide sequence ID" value="NC_010546.1"/>
</dbReference>
<dbReference type="SMR" id="B1WSY4"/>
<dbReference type="STRING" id="43989.cce_0963"/>
<dbReference type="KEGG" id="cyt:cce_0963"/>
<dbReference type="eggNOG" id="COG1211">
    <property type="taxonomic scope" value="Bacteria"/>
</dbReference>
<dbReference type="HOGENOM" id="CLU_061281_1_0_3"/>
<dbReference type="OrthoDB" id="9806837at2"/>
<dbReference type="UniPathway" id="UPA00056">
    <property type="reaction ID" value="UER00093"/>
</dbReference>
<dbReference type="Proteomes" id="UP000001203">
    <property type="component" value="Chromosome circular"/>
</dbReference>
<dbReference type="GO" id="GO:0050518">
    <property type="term" value="F:2-C-methyl-D-erythritol 4-phosphate cytidylyltransferase activity"/>
    <property type="evidence" value="ECO:0007669"/>
    <property type="project" value="UniProtKB-UniRule"/>
</dbReference>
<dbReference type="GO" id="GO:0019288">
    <property type="term" value="P:isopentenyl diphosphate biosynthetic process, methylerythritol 4-phosphate pathway"/>
    <property type="evidence" value="ECO:0007669"/>
    <property type="project" value="UniProtKB-UniRule"/>
</dbReference>
<dbReference type="CDD" id="cd02516">
    <property type="entry name" value="CDP-ME_synthetase"/>
    <property type="match status" value="1"/>
</dbReference>
<dbReference type="FunFam" id="3.90.550.10:FF:000003">
    <property type="entry name" value="2-C-methyl-D-erythritol 4-phosphate cytidylyltransferase"/>
    <property type="match status" value="1"/>
</dbReference>
<dbReference type="Gene3D" id="3.90.550.10">
    <property type="entry name" value="Spore Coat Polysaccharide Biosynthesis Protein SpsA, Chain A"/>
    <property type="match status" value="1"/>
</dbReference>
<dbReference type="HAMAP" id="MF_00108">
    <property type="entry name" value="IspD"/>
    <property type="match status" value="1"/>
</dbReference>
<dbReference type="InterPro" id="IPR001228">
    <property type="entry name" value="IspD"/>
</dbReference>
<dbReference type="InterPro" id="IPR034683">
    <property type="entry name" value="IspD/TarI"/>
</dbReference>
<dbReference type="InterPro" id="IPR050088">
    <property type="entry name" value="IspD/TarI_cytidylyltransf_bact"/>
</dbReference>
<dbReference type="InterPro" id="IPR018294">
    <property type="entry name" value="ISPD_synthase_CS"/>
</dbReference>
<dbReference type="InterPro" id="IPR029044">
    <property type="entry name" value="Nucleotide-diphossugar_trans"/>
</dbReference>
<dbReference type="NCBIfam" id="TIGR00453">
    <property type="entry name" value="ispD"/>
    <property type="match status" value="1"/>
</dbReference>
<dbReference type="PANTHER" id="PTHR32125">
    <property type="entry name" value="2-C-METHYL-D-ERYTHRITOL 4-PHOSPHATE CYTIDYLYLTRANSFERASE, CHLOROPLASTIC"/>
    <property type="match status" value="1"/>
</dbReference>
<dbReference type="PANTHER" id="PTHR32125:SF4">
    <property type="entry name" value="2-C-METHYL-D-ERYTHRITOL 4-PHOSPHATE CYTIDYLYLTRANSFERASE, CHLOROPLASTIC"/>
    <property type="match status" value="1"/>
</dbReference>
<dbReference type="Pfam" id="PF01128">
    <property type="entry name" value="IspD"/>
    <property type="match status" value="1"/>
</dbReference>
<dbReference type="SUPFAM" id="SSF53448">
    <property type="entry name" value="Nucleotide-diphospho-sugar transferases"/>
    <property type="match status" value="1"/>
</dbReference>
<dbReference type="PROSITE" id="PS01295">
    <property type="entry name" value="ISPD"/>
    <property type="match status" value="1"/>
</dbReference>
<proteinExistence type="inferred from homology"/>
<sequence length="228" mass="25255">MYLLIPAAGMGKRMGSNRNKLLLTLLGKPLLSWTLLAAEASQKIEWVGIIGQPYDFPEFKTILTTISFTKPVELIQGGETRQASVYNGLQALPKAADNVLIHDGARCLVTPDLFDRCAEELLTCQGLIAAISVKDTIKIVDSNQFIKDTPNRSNLWAAQTPQGFKVSLLKQCHEKGYQLGWQVTDDAALFEKCQLPVKIVEGEETNLKVTTPVDLAIAEFILKQRFTH</sequence>
<evidence type="ECO:0000255" key="1">
    <source>
        <dbReference type="HAMAP-Rule" id="MF_00108"/>
    </source>
</evidence>
<organism>
    <name type="scientific">Crocosphaera subtropica (strain ATCC 51142 / BH68)</name>
    <name type="common">Cyanothece sp. (strain ATCC 51142)</name>
    <dbReference type="NCBI Taxonomy" id="43989"/>
    <lineage>
        <taxon>Bacteria</taxon>
        <taxon>Bacillati</taxon>
        <taxon>Cyanobacteriota</taxon>
        <taxon>Cyanophyceae</taxon>
        <taxon>Oscillatoriophycideae</taxon>
        <taxon>Chroococcales</taxon>
        <taxon>Aphanothecaceae</taxon>
        <taxon>Crocosphaera</taxon>
        <taxon>Crocosphaera subtropica</taxon>
    </lineage>
</organism>
<feature type="chain" id="PRO_1000094325" description="2-C-methyl-D-erythritol 4-phosphate cytidylyltransferase">
    <location>
        <begin position="1"/>
        <end position="228"/>
    </location>
</feature>
<feature type="site" description="Transition state stabilizer" evidence="1">
    <location>
        <position position="13"/>
    </location>
</feature>
<feature type="site" description="Transition state stabilizer" evidence="1">
    <location>
        <position position="20"/>
    </location>
</feature>
<feature type="site" description="Positions MEP for the nucleophilic attack" evidence="1">
    <location>
        <position position="152"/>
    </location>
</feature>
<feature type="site" description="Positions MEP for the nucleophilic attack" evidence="1">
    <location>
        <position position="208"/>
    </location>
</feature>
<comment type="function">
    <text evidence="1">Catalyzes the formation of 4-diphosphocytidyl-2-C-methyl-D-erythritol from CTP and 2-C-methyl-D-erythritol 4-phosphate (MEP).</text>
</comment>
<comment type="catalytic activity">
    <reaction evidence="1">
        <text>2-C-methyl-D-erythritol 4-phosphate + CTP + H(+) = 4-CDP-2-C-methyl-D-erythritol + diphosphate</text>
        <dbReference type="Rhea" id="RHEA:13429"/>
        <dbReference type="ChEBI" id="CHEBI:15378"/>
        <dbReference type="ChEBI" id="CHEBI:33019"/>
        <dbReference type="ChEBI" id="CHEBI:37563"/>
        <dbReference type="ChEBI" id="CHEBI:57823"/>
        <dbReference type="ChEBI" id="CHEBI:58262"/>
        <dbReference type="EC" id="2.7.7.60"/>
    </reaction>
</comment>
<comment type="pathway">
    <text evidence="1">Isoprenoid biosynthesis; isopentenyl diphosphate biosynthesis via DXP pathway; isopentenyl diphosphate from 1-deoxy-D-xylulose 5-phosphate: step 2/6.</text>
</comment>
<comment type="similarity">
    <text evidence="1">Belongs to the IspD/TarI cytidylyltransferase family. IspD subfamily.</text>
</comment>